<evidence type="ECO:0000255" key="1">
    <source>
        <dbReference type="HAMAP-Rule" id="MF_00440"/>
    </source>
</evidence>
<keyword id="KW-0067">ATP-binding</keyword>
<keyword id="KW-0238">DNA-binding</keyword>
<keyword id="KW-0479">Metal-binding</keyword>
<keyword id="KW-0547">Nucleotide-binding</keyword>
<keyword id="KW-0678">Repressor</keyword>
<keyword id="KW-0804">Transcription</keyword>
<keyword id="KW-0805">Transcription regulation</keyword>
<keyword id="KW-0862">Zinc</keyword>
<keyword id="KW-0863">Zinc-finger</keyword>
<sequence>MQCPFCNHGELKVIDSRNAPEANAIKRRRECLKCSQRFTTFETVELTLQVLKRDGRYENFQESKLIHGLNAASSHTRIGQDQVHAIASNVKSELLGKQNREISTKEIGELVMKYLKKADMIAYIRFACVYRRFKDVGELMEVLLSATPDMEK</sequence>
<reference key="1">
    <citation type="journal article" date="1999" name="Nat. Genet.">
        <title>Comparative genomes of Chlamydia pneumoniae and C. trachomatis.</title>
        <authorList>
            <person name="Kalman S."/>
            <person name="Mitchell W.P."/>
            <person name="Marathe R."/>
            <person name="Lammel C.J."/>
            <person name="Fan J."/>
            <person name="Hyman R.W."/>
            <person name="Olinger L."/>
            <person name="Grimwood J."/>
            <person name="Davis R.W."/>
            <person name="Stephens R.S."/>
        </authorList>
    </citation>
    <scope>NUCLEOTIDE SEQUENCE [LARGE SCALE GENOMIC DNA]</scope>
    <source>
        <strain>CWL029</strain>
    </source>
</reference>
<reference key="2">
    <citation type="journal article" date="2000" name="Nucleic Acids Res.">
        <title>Genome sequences of Chlamydia trachomatis MoPn and Chlamydia pneumoniae AR39.</title>
        <authorList>
            <person name="Read T.D."/>
            <person name="Brunham R.C."/>
            <person name="Shen C."/>
            <person name="Gill S.R."/>
            <person name="Heidelberg J.F."/>
            <person name="White O."/>
            <person name="Hickey E.K."/>
            <person name="Peterson J.D."/>
            <person name="Utterback T.R."/>
            <person name="Berry K.J."/>
            <person name="Bass S."/>
            <person name="Linher K.D."/>
            <person name="Weidman J.F."/>
            <person name="Khouri H.M."/>
            <person name="Craven B."/>
            <person name="Bowman C."/>
            <person name="Dodson R.J."/>
            <person name="Gwinn M.L."/>
            <person name="Nelson W.C."/>
            <person name="DeBoy R.T."/>
            <person name="Kolonay J.F."/>
            <person name="McClarty G."/>
            <person name="Salzberg S.L."/>
            <person name="Eisen J.A."/>
            <person name="Fraser C.M."/>
        </authorList>
    </citation>
    <scope>NUCLEOTIDE SEQUENCE [LARGE SCALE GENOMIC DNA]</scope>
    <source>
        <strain>AR39</strain>
    </source>
</reference>
<reference key="3">
    <citation type="journal article" date="2000" name="Nucleic Acids Res.">
        <title>Comparison of whole genome sequences of Chlamydia pneumoniae J138 from Japan and CWL029 from USA.</title>
        <authorList>
            <person name="Shirai M."/>
            <person name="Hirakawa H."/>
            <person name="Kimoto M."/>
            <person name="Tabuchi M."/>
            <person name="Kishi F."/>
            <person name="Ouchi K."/>
            <person name="Shiba T."/>
            <person name="Ishii K."/>
            <person name="Hattori M."/>
            <person name="Kuhara S."/>
            <person name="Nakazawa T."/>
        </authorList>
    </citation>
    <scope>NUCLEOTIDE SEQUENCE [LARGE SCALE GENOMIC DNA]</scope>
    <source>
        <strain>J138</strain>
    </source>
</reference>
<reference key="4">
    <citation type="submission" date="2002-05" db="EMBL/GenBank/DDBJ databases">
        <title>The genome sequence of Chlamydia pneumoniae TW183 and comparison with other Chlamydia strains based on whole genome sequence analysis.</title>
        <authorList>
            <person name="Geng M.M."/>
            <person name="Schuhmacher A."/>
            <person name="Muehldorfer I."/>
            <person name="Bensch K.W."/>
            <person name="Schaefer K.P."/>
            <person name="Schneider S."/>
            <person name="Pohl T."/>
            <person name="Essig A."/>
            <person name="Marre R."/>
            <person name="Melchers K."/>
        </authorList>
    </citation>
    <scope>NUCLEOTIDE SEQUENCE [LARGE SCALE GENOMIC DNA]</scope>
    <source>
        <strain>TW-183</strain>
    </source>
</reference>
<dbReference type="EMBL" id="AE001363">
    <property type="protein sequence ID" value="AAD18673.1"/>
    <property type="molecule type" value="Genomic_DNA"/>
</dbReference>
<dbReference type="EMBL" id="AE002161">
    <property type="protein sequence ID" value="AAF38088.1"/>
    <property type="molecule type" value="Genomic_DNA"/>
</dbReference>
<dbReference type="EMBL" id="BA000008">
    <property type="protein sequence ID" value="BAA98739.1"/>
    <property type="molecule type" value="Genomic_DNA"/>
</dbReference>
<dbReference type="EMBL" id="AE009440">
    <property type="protein sequence ID" value="AAP98483.1"/>
    <property type="molecule type" value="Genomic_DNA"/>
</dbReference>
<dbReference type="PIR" id="A86557">
    <property type="entry name" value="A86557"/>
</dbReference>
<dbReference type="PIR" id="F72066">
    <property type="entry name" value="F72066"/>
</dbReference>
<dbReference type="RefSeq" id="NP_224729.1">
    <property type="nucleotide sequence ID" value="NC_000922.1"/>
</dbReference>
<dbReference type="RefSeq" id="WP_010883171.1">
    <property type="nucleotide sequence ID" value="NZ_LN847257.1"/>
</dbReference>
<dbReference type="SMR" id="Q9Z819"/>
<dbReference type="STRING" id="406984.CPK_ORF01048"/>
<dbReference type="GeneID" id="45050575"/>
<dbReference type="KEGG" id="cpa:CP_0219"/>
<dbReference type="KEGG" id="cpj:CPj0533"/>
<dbReference type="KEGG" id="cpn:CPn_0533"/>
<dbReference type="KEGG" id="cpt:CpB0554"/>
<dbReference type="PATRIC" id="fig|115713.3.peg.593"/>
<dbReference type="eggNOG" id="COG1327">
    <property type="taxonomic scope" value="Bacteria"/>
</dbReference>
<dbReference type="HOGENOM" id="CLU_108412_0_0_0"/>
<dbReference type="OMA" id="YRFTTYE"/>
<dbReference type="OrthoDB" id="9807461at2"/>
<dbReference type="Proteomes" id="UP000000583">
    <property type="component" value="Chromosome"/>
</dbReference>
<dbReference type="Proteomes" id="UP000000801">
    <property type="component" value="Chromosome"/>
</dbReference>
<dbReference type="GO" id="GO:0005524">
    <property type="term" value="F:ATP binding"/>
    <property type="evidence" value="ECO:0007669"/>
    <property type="project" value="UniProtKB-KW"/>
</dbReference>
<dbReference type="GO" id="GO:0003677">
    <property type="term" value="F:DNA binding"/>
    <property type="evidence" value="ECO:0007669"/>
    <property type="project" value="UniProtKB-KW"/>
</dbReference>
<dbReference type="GO" id="GO:0008270">
    <property type="term" value="F:zinc ion binding"/>
    <property type="evidence" value="ECO:0007669"/>
    <property type="project" value="UniProtKB-UniRule"/>
</dbReference>
<dbReference type="GO" id="GO:0045892">
    <property type="term" value="P:negative regulation of DNA-templated transcription"/>
    <property type="evidence" value="ECO:0007669"/>
    <property type="project" value="UniProtKB-UniRule"/>
</dbReference>
<dbReference type="HAMAP" id="MF_00440">
    <property type="entry name" value="NrdR"/>
    <property type="match status" value="1"/>
</dbReference>
<dbReference type="InterPro" id="IPR005144">
    <property type="entry name" value="ATP-cone_dom"/>
</dbReference>
<dbReference type="InterPro" id="IPR055173">
    <property type="entry name" value="NrdR-like_N"/>
</dbReference>
<dbReference type="InterPro" id="IPR003796">
    <property type="entry name" value="RNR_NrdR-like"/>
</dbReference>
<dbReference type="NCBIfam" id="TIGR00244">
    <property type="entry name" value="transcriptional regulator NrdR"/>
    <property type="match status" value="1"/>
</dbReference>
<dbReference type="PANTHER" id="PTHR30455">
    <property type="entry name" value="TRANSCRIPTIONAL REPRESSOR NRDR"/>
    <property type="match status" value="1"/>
</dbReference>
<dbReference type="PANTHER" id="PTHR30455:SF2">
    <property type="entry name" value="TRANSCRIPTIONAL REPRESSOR NRDR"/>
    <property type="match status" value="1"/>
</dbReference>
<dbReference type="Pfam" id="PF03477">
    <property type="entry name" value="ATP-cone"/>
    <property type="match status" value="1"/>
</dbReference>
<dbReference type="Pfam" id="PF22811">
    <property type="entry name" value="Zn_ribbon_NrdR"/>
    <property type="match status" value="1"/>
</dbReference>
<dbReference type="PROSITE" id="PS51161">
    <property type="entry name" value="ATP_CONE"/>
    <property type="match status" value="1"/>
</dbReference>
<organism>
    <name type="scientific">Chlamydia pneumoniae</name>
    <name type="common">Chlamydophila pneumoniae</name>
    <dbReference type="NCBI Taxonomy" id="83558"/>
    <lineage>
        <taxon>Bacteria</taxon>
        <taxon>Pseudomonadati</taxon>
        <taxon>Chlamydiota</taxon>
        <taxon>Chlamydiia</taxon>
        <taxon>Chlamydiales</taxon>
        <taxon>Chlamydiaceae</taxon>
        <taxon>Chlamydia/Chlamydophila group</taxon>
        <taxon>Chlamydia</taxon>
    </lineage>
</organism>
<accession>Q9Z819</accession>
<name>NRDR_CHLPN</name>
<proteinExistence type="inferred from homology"/>
<feature type="chain" id="PRO_0000182281" description="Transcriptional repressor NrdR">
    <location>
        <begin position="1"/>
        <end position="152"/>
    </location>
</feature>
<feature type="domain" description="ATP-cone" evidence="1">
    <location>
        <begin position="48"/>
        <end position="138"/>
    </location>
</feature>
<feature type="zinc finger region" evidence="1">
    <location>
        <begin position="3"/>
        <end position="34"/>
    </location>
</feature>
<protein>
    <recommendedName>
        <fullName evidence="1">Transcriptional repressor NrdR</fullName>
    </recommendedName>
</protein>
<comment type="function">
    <text evidence="1">Negatively regulates transcription of bacterial ribonucleotide reductase nrd genes and operons by binding to NrdR-boxes.</text>
</comment>
<comment type="cofactor">
    <cofactor evidence="1">
        <name>Zn(2+)</name>
        <dbReference type="ChEBI" id="CHEBI:29105"/>
    </cofactor>
    <text evidence="1">Binds 1 zinc ion.</text>
</comment>
<comment type="similarity">
    <text evidence="1">Belongs to the NrdR family.</text>
</comment>
<gene>
    <name evidence="1" type="primary">nrdR</name>
    <name type="ordered locus">CPn_0533</name>
    <name type="ordered locus">CP_0219</name>
    <name type="ordered locus">CPj0533</name>
    <name type="ordered locus">CpB0554</name>
</gene>